<feature type="chain" id="PRO_1000087859" description="Proline--tRNA ligase">
    <location>
        <begin position="1"/>
        <end position="616"/>
    </location>
</feature>
<evidence type="ECO:0000255" key="1">
    <source>
        <dbReference type="HAMAP-Rule" id="MF_01569"/>
    </source>
</evidence>
<gene>
    <name evidence="1" type="primary">proS</name>
    <name type="ordered locus">SGO_1851</name>
</gene>
<name>SYP_STRGC</name>
<dbReference type="EC" id="6.1.1.15" evidence="1"/>
<dbReference type="EMBL" id="CP000725">
    <property type="protein sequence ID" value="ABV10446.1"/>
    <property type="molecule type" value="Genomic_DNA"/>
</dbReference>
<dbReference type="RefSeq" id="WP_012130878.1">
    <property type="nucleotide sequence ID" value="NC_009785.1"/>
</dbReference>
<dbReference type="SMR" id="A8AZA7"/>
<dbReference type="STRING" id="467705.SGO_1851"/>
<dbReference type="KEGG" id="sgo:SGO_1851"/>
<dbReference type="eggNOG" id="COG0442">
    <property type="taxonomic scope" value="Bacteria"/>
</dbReference>
<dbReference type="HOGENOM" id="CLU_016739_0_0_9"/>
<dbReference type="Proteomes" id="UP000001131">
    <property type="component" value="Chromosome"/>
</dbReference>
<dbReference type="GO" id="GO:0005829">
    <property type="term" value="C:cytosol"/>
    <property type="evidence" value="ECO:0007669"/>
    <property type="project" value="TreeGrafter"/>
</dbReference>
<dbReference type="GO" id="GO:0002161">
    <property type="term" value="F:aminoacyl-tRNA deacylase activity"/>
    <property type="evidence" value="ECO:0007669"/>
    <property type="project" value="InterPro"/>
</dbReference>
<dbReference type="GO" id="GO:0005524">
    <property type="term" value="F:ATP binding"/>
    <property type="evidence" value="ECO:0007669"/>
    <property type="project" value="UniProtKB-UniRule"/>
</dbReference>
<dbReference type="GO" id="GO:0140096">
    <property type="term" value="F:catalytic activity, acting on a protein"/>
    <property type="evidence" value="ECO:0007669"/>
    <property type="project" value="UniProtKB-ARBA"/>
</dbReference>
<dbReference type="GO" id="GO:0004827">
    <property type="term" value="F:proline-tRNA ligase activity"/>
    <property type="evidence" value="ECO:0007669"/>
    <property type="project" value="UniProtKB-UniRule"/>
</dbReference>
<dbReference type="GO" id="GO:0016740">
    <property type="term" value="F:transferase activity"/>
    <property type="evidence" value="ECO:0007669"/>
    <property type="project" value="UniProtKB-ARBA"/>
</dbReference>
<dbReference type="GO" id="GO:0006433">
    <property type="term" value="P:prolyl-tRNA aminoacylation"/>
    <property type="evidence" value="ECO:0007669"/>
    <property type="project" value="UniProtKB-UniRule"/>
</dbReference>
<dbReference type="CDD" id="cd04334">
    <property type="entry name" value="ProRS-INS"/>
    <property type="match status" value="1"/>
</dbReference>
<dbReference type="CDD" id="cd00861">
    <property type="entry name" value="ProRS_anticodon_short"/>
    <property type="match status" value="1"/>
</dbReference>
<dbReference type="CDD" id="cd00779">
    <property type="entry name" value="ProRS_core_prok"/>
    <property type="match status" value="1"/>
</dbReference>
<dbReference type="FunFam" id="3.30.930.10:FF:000062">
    <property type="entry name" value="Proline--tRNA ligase"/>
    <property type="match status" value="1"/>
</dbReference>
<dbReference type="FunFam" id="3.30.930.10:FF:000070">
    <property type="entry name" value="Proline--tRNA ligase"/>
    <property type="match status" value="1"/>
</dbReference>
<dbReference type="FunFam" id="3.40.50.800:FF:000011">
    <property type="entry name" value="Proline--tRNA ligase"/>
    <property type="match status" value="1"/>
</dbReference>
<dbReference type="Gene3D" id="3.40.50.800">
    <property type="entry name" value="Anticodon-binding domain"/>
    <property type="match status" value="1"/>
</dbReference>
<dbReference type="Gene3D" id="3.30.930.10">
    <property type="entry name" value="Bira Bifunctional Protein, Domain 2"/>
    <property type="match status" value="2"/>
</dbReference>
<dbReference type="Gene3D" id="3.90.960.10">
    <property type="entry name" value="YbaK/aminoacyl-tRNA synthetase-associated domain"/>
    <property type="match status" value="1"/>
</dbReference>
<dbReference type="HAMAP" id="MF_01569">
    <property type="entry name" value="Pro_tRNA_synth_type1"/>
    <property type="match status" value="1"/>
</dbReference>
<dbReference type="InterPro" id="IPR002314">
    <property type="entry name" value="aa-tRNA-synt_IIb"/>
</dbReference>
<dbReference type="InterPro" id="IPR006195">
    <property type="entry name" value="aa-tRNA-synth_II"/>
</dbReference>
<dbReference type="InterPro" id="IPR045864">
    <property type="entry name" value="aa-tRNA-synth_II/BPL/LPL"/>
</dbReference>
<dbReference type="InterPro" id="IPR004154">
    <property type="entry name" value="Anticodon-bd"/>
</dbReference>
<dbReference type="InterPro" id="IPR036621">
    <property type="entry name" value="Anticodon-bd_dom_sf"/>
</dbReference>
<dbReference type="InterPro" id="IPR002316">
    <property type="entry name" value="Pro-tRNA-ligase_IIa"/>
</dbReference>
<dbReference type="InterPro" id="IPR004500">
    <property type="entry name" value="Pro-tRNA-synth_IIa_bac-type"/>
</dbReference>
<dbReference type="InterPro" id="IPR023717">
    <property type="entry name" value="Pro-tRNA-Synthase_IIa_type1"/>
</dbReference>
<dbReference type="InterPro" id="IPR050062">
    <property type="entry name" value="Pro-tRNA_synthetase"/>
</dbReference>
<dbReference type="InterPro" id="IPR044140">
    <property type="entry name" value="ProRS_anticodon_short"/>
</dbReference>
<dbReference type="InterPro" id="IPR033730">
    <property type="entry name" value="ProRS_core_prok"/>
</dbReference>
<dbReference type="InterPro" id="IPR036754">
    <property type="entry name" value="YbaK/aa-tRNA-synt-asso_dom_sf"/>
</dbReference>
<dbReference type="InterPro" id="IPR007214">
    <property type="entry name" value="YbaK/aa-tRNA-synth-assoc-dom"/>
</dbReference>
<dbReference type="NCBIfam" id="NF006625">
    <property type="entry name" value="PRK09194.1"/>
    <property type="match status" value="1"/>
</dbReference>
<dbReference type="NCBIfam" id="TIGR00409">
    <property type="entry name" value="proS_fam_II"/>
    <property type="match status" value="2"/>
</dbReference>
<dbReference type="PANTHER" id="PTHR42753">
    <property type="entry name" value="MITOCHONDRIAL RIBOSOME PROTEIN L39/PROLYL-TRNA LIGASE FAMILY MEMBER"/>
    <property type="match status" value="1"/>
</dbReference>
<dbReference type="PANTHER" id="PTHR42753:SF2">
    <property type="entry name" value="PROLINE--TRNA LIGASE"/>
    <property type="match status" value="1"/>
</dbReference>
<dbReference type="Pfam" id="PF03129">
    <property type="entry name" value="HGTP_anticodon"/>
    <property type="match status" value="1"/>
</dbReference>
<dbReference type="Pfam" id="PF00587">
    <property type="entry name" value="tRNA-synt_2b"/>
    <property type="match status" value="1"/>
</dbReference>
<dbReference type="Pfam" id="PF04073">
    <property type="entry name" value="tRNA_edit"/>
    <property type="match status" value="1"/>
</dbReference>
<dbReference type="PRINTS" id="PR01046">
    <property type="entry name" value="TRNASYNTHPRO"/>
</dbReference>
<dbReference type="SUPFAM" id="SSF52954">
    <property type="entry name" value="Class II aaRS ABD-related"/>
    <property type="match status" value="1"/>
</dbReference>
<dbReference type="SUPFAM" id="SSF55681">
    <property type="entry name" value="Class II aaRS and biotin synthetases"/>
    <property type="match status" value="1"/>
</dbReference>
<dbReference type="SUPFAM" id="SSF55826">
    <property type="entry name" value="YbaK/ProRS associated domain"/>
    <property type="match status" value="1"/>
</dbReference>
<dbReference type="PROSITE" id="PS50862">
    <property type="entry name" value="AA_TRNA_LIGASE_II"/>
    <property type="match status" value="1"/>
</dbReference>
<reference key="1">
    <citation type="journal article" date="2007" name="J. Bacteriol.">
        <title>Genome-wide transcriptional changes in Streptococcus gordonii in response to competence signaling peptide.</title>
        <authorList>
            <person name="Vickerman M.M."/>
            <person name="Iobst S."/>
            <person name="Jesionowski A.M."/>
            <person name="Gill S.R."/>
        </authorList>
    </citation>
    <scope>NUCLEOTIDE SEQUENCE [LARGE SCALE GENOMIC DNA]</scope>
    <source>
        <strain>Challis / ATCC 35105 / BCRC 15272 / CH1 / DL1 / V288</strain>
    </source>
</reference>
<comment type="function">
    <text evidence="1">Catalyzes the attachment of proline to tRNA(Pro) in a two-step reaction: proline is first activated by ATP to form Pro-AMP and then transferred to the acceptor end of tRNA(Pro). As ProRS can inadvertently accommodate and process non-cognate amino acids such as alanine and cysteine, to avoid such errors it has two additional distinct editing activities against alanine. One activity is designated as 'pretransfer' editing and involves the tRNA(Pro)-independent hydrolysis of activated Ala-AMP. The other activity is designated 'posttransfer' editing and involves deacylation of mischarged Ala-tRNA(Pro). The misacylated Cys-tRNA(Pro) is not edited by ProRS.</text>
</comment>
<comment type="catalytic activity">
    <reaction evidence="1">
        <text>tRNA(Pro) + L-proline + ATP = L-prolyl-tRNA(Pro) + AMP + diphosphate</text>
        <dbReference type="Rhea" id="RHEA:14305"/>
        <dbReference type="Rhea" id="RHEA-COMP:9700"/>
        <dbReference type="Rhea" id="RHEA-COMP:9702"/>
        <dbReference type="ChEBI" id="CHEBI:30616"/>
        <dbReference type="ChEBI" id="CHEBI:33019"/>
        <dbReference type="ChEBI" id="CHEBI:60039"/>
        <dbReference type="ChEBI" id="CHEBI:78442"/>
        <dbReference type="ChEBI" id="CHEBI:78532"/>
        <dbReference type="ChEBI" id="CHEBI:456215"/>
        <dbReference type="EC" id="6.1.1.15"/>
    </reaction>
</comment>
<comment type="subunit">
    <text evidence="1">Homodimer.</text>
</comment>
<comment type="subcellular location">
    <subcellularLocation>
        <location evidence="1">Cytoplasm</location>
    </subcellularLocation>
</comment>
<comment type="domain">
    <text evidence="1">Consists of three domains: the N-terminal catalytic domain, the editing domain and the C-terminal anticodon-binding domain.</text>
</comment>
<comment type="similarity">
    <text evidence="1">Belongs to the class-II aminoacyl-tRNA synthetase family. ProS type 1 subfamily.</text>
</comment>
<keyword id="KW-0030">Aminoacyl-tRNA synthetase</keyword>
<keyword id="KW-0067">ATP-binding</keyword>
<keyword id="KW-0963">Cytoplasm</keyword>
<keyword id="KW-0436">Ligase</keyword>
<keyword id="KW-0547">Nucleotide-binding</keyword>
<keyword id="KW-0648">Protein biosynthesis</keyword>
<keyword id="KW-1185">Reference proteome</keyword>
<protein>
    <recommendedName>
        <fullName evidence="1">Proline--tRNA ligase</fullName>
        <ecNumber evidence="1">6.1.1.15</ecNumber>
    </recommendedName>
    <alternativeName>
        <fullName evidence="1">Prolyl-tRNA synthetase</fullName>
        <shortName evidence="1">ProRS</shortName>
    </alternativeName>
</protein>
<proteinExistence type="inferred from homology"/>
<accession>A8AZA7</accession>
<organism>
    <name type="scientific">Streptococcus gordonii (strain Challis / ATCC 35105 / BCRC 15272 / CH1 / DL1 / V288)</name>
    <dbReference type="NCBI Taxonomy" id="467705"/>
    <lineage>
        <taxon>Bacteria</taxon>
        <taxon>Bacillati</taxon>
        <taxon>Bacillota</taxon>
        <taxon>Bacilli</taxon>
        <taxon>Lactobacillales</taxon>
        <taxon>Streptococcaceae</taxon>
        <taxon>Streptococcus</taxon>
    </lineage>
</organism>
<sequence length="616" mass="68509">MKQSKMLIPTLREMPSDAQVISHALLLRAGYVRQVSAGVYSYLPLANRVIEKAKNIMRQEFEKIGAVEMLAPALLSADLWRESGRYETYGDDLFKLKNREGSDFILGPTHEETFTALVRDSVKSYKQLPLNLYQIQPKYRDEKRPRNGLLRTREFIMKDAYSFHANYDSLDVTYDEYKSAYEKIFTRSEIDFKAIIGDGGAMGGKDSQEFMAITPDRTDLDRWLVLDKSVASLDEIPADVLEAIKAELSNWMVSGEDTIAYSSESSYAANLEMATNEYKPSNRVVAETELVRVETPNCKTIDEVAAFLQVSEEQTIKTLVYIADEKPVVALLVGNDQLNEVKLKNHLGADFFEAATEAEVQELFGANFGSLGPVNLPEEVTIIADRKVQDLSNAVAGANEDGYHLTGVNPGRDFTAEYVDIREVREGEISPDGNGVLKFARGIEIGHIFKLGTRYSDSMNATVLDENGRAVPLVMGCYGIGVSRLLSAVMEQHARLFVNKTPKGEYRYAWGINFPKELAPFDVHLIPVNVKDEESLALTDKIEESLVGAGYEVLVDDRNERVGVKFSDSDLIGLPIRVTVGKKAAEGIVEVKIKASGDTIEVHADNLIETLSILTK</sequence>